<gene>
    <name evidence="1" type="primary">ruvB</name>
    <name type="ordered locus">EcolC_1772</name>
</gene>
<evidence type="ECO:0000255" key="1">
    <source>
        <dbReference type="HAMAP-Rule" id="MF_00016"/>
    </source>
</evidence>
<accession>B1J0M8</accession>
<name>RUVB_ECOLC</name>
<sequence length="336" mass="37174">MIEADRLISAGTTLPEDVADRAIRPKLLEEYVGQPQVRSQMEIFIKAAKLRGDALDHLLIFGPPGLGKTTLANIVANEMGVNLRTTSGPVLEKAGDLAAMLTNLEPHDVLFIDEIHRLSPVVEEVLYPAMEDYQLDIMIGEGPAARSIKIDLPPFTLIGATTRAGSLTSPLRDRFGIVQRLEFYQVPDLQYIVSRSARFMGLEMSDDGALEVARRARGTPRIANRLLRRVRDFAEVKHDGTISADIAAQALDMLNVDAEGFDYMDRKLLLAVIDKFFGGPVGLDNLAAAIGEERETIEDVLEPYLIQQGFLQRTPRGRMATTRAWNHFGITPPEMP</sequence>
<protein>
    <recommendedName>
        <fullName evidence="1">Holliday junction branch migration complex subunit RuvB</fullName>
        <ecNumber evidence="1">3.6.4.-</ecNumber>
    </recommendedName>
</protein>
<organism>
    <name type="scientific">Escherichia coli (strain ATCC 8739 / DSM 1576 / NBRC 3972 / NCIMB 8545 / WDCM 00012 / Crooks)</name>
    <dbReference type="NCBI Taxonomy" id="481805"/>
    <lineage>
        <taxon>Bacteria</taxon>
        <taxon>Pseudomonadati</taxon>
        <taxon>Pseudomonadota</taxon>
        <taxon>Gammaproteobacteria</taxon>
        <taxon>Enterobacterales</taxon>
        <taxon>Enterobacteriaceae</taxon>
        <taxon>Escherichia</taxon>
    </lineage>
</organism>
<proteinExistence type="inferred from homology"/>
<keyword id="KW-0067">ATP-binding</keyword>
<keyword id="KW-0963">Cytoplasm</keyword>
<keyword id="KW-0227">DNA damage</keyword>
<keyword id="KW-0233">DNA recombination</keyword>
<keyword id="KW-0234">DNA repair</keyword>
<keyword id="KW-0238">DNA-binding</keyword>
<keyword id="KW-0378">Hydrolase</keyword>
<keyword id="KW-0547">Nucleotide-binding</keyword>
<keyword id="KW-0742">SOS response</keyword>
<comment type="function">
    <text evidence="1">The RuvA-RuvB-RuvC complex processes Holliday junction (HJ) DNA during genetic recombination and DNA repair, while the RuvA-RuvB complex plays an important role in the rescue of blocked DNA replication forks via replication fork reversal (RFR). RuvA specifically binds to HJ cruciform DNA, conferring on it an open structure. The RuvB hexamer acts as an ATP-dependent pump, pulling dsDNA into and through the RuvAB complex. RuvB forms 2 homohexamers on either side of HJ DNA bound by 1 or 2 RuvA tetramers; 4 subunits per hexamer contact DNA at a time. Coordinated motions by a converter formed by DNA-disengaged RuvB subunits stimulates ATP hydrolysis and nucleotide exchange. Immobilization of the converter enables RuvB to convert the ATP-contained energy into a lever motion, pulling 2 nucleotides of DNA out of the RuvA tetramer per ATP hydrolyzed, thus driving DNA branch migration. The RuvB motors rotate together with the DNA substrate, which together with the progressing nucleotide cycle form the mechanistic basis for DNA recombination by continuous HJ branch migration. Branch migration allows RuvC to scan DNA until it finds its consensus sequence, where it cleaves and resolves cruciform DNA.</text>
</comment>
<comment type="catalytic activity">
    <reaction evidence="1">
        <text>ATP + H2O = ADP + phosphate + H(+)</text>
        <dbReference type="Rhea" id="RHEA:13065"/>
        <dbReference type="ChEBI" id="CHEBI:15377"/>
        <dbReference type="ChEBI" id="CHEBI:15378"/>
        <dbReference type="ChEBI" id="CHEBI:30616"/>
        <dbReference type="ChEBI" id="CHEBI:43474"/>
        <dbReference type="ChEBI" id="CHEBI:456216"/>
    </reaction>
</comment>
<comment type="subunit">
    <text evidence="1">Homohexamer. Forms an RuvA(8)-RuvB(12)-Holliday junction (HJ) complex. HJ DNA is sandwiched between 2 RuvA tetramers; dsDNA enters through RuvA and exits via RuvB. An RuvB hexamer assembles on each DNA strand where it exits the tetramer. Each RuvB hexamer is contacted by two RuvA subunits (via domain III) on 2 adjacent RuvB subunits; this complex drives branch migration. In the full resolvosome a probable DNA-RuvA(4)-RuvB(12)-RuvC(2) complex forms which resolves the HJ.</text>
</comment>
<comment type="subcellular location">
    <subcellularLocation>
        <location evidence="1">Cytoplasm</location>
    </subcellularLocation>
</comment>
<comment type="domain">
    <text evidence="1">Has 3 domains, the large (RuvB-L) and small ATPase (RuvB-S) domains and the C-terminal head (RuvB-H) domain. The head domain binds DNA, while the ATPase domains jointly bind ATP, ADP or are empty depending on the state of the subunit in the translocation cycle. During a single DNA translocation step the structure of each domain remains the same, but their relative positions change.</text>
</comment>
<comment type="similarity">
    <text evidence="1">Belongs to the RuvB family.</text>
</comment>
<reference key="1">
    <citation type="submission" date="2008-02" db="EMBL/GenBank/DDBJ databases">
        <title>Complete sequence of Escherichia coli C str. ATCC 8739.</title>
        <authorList>
            <person name="Copeland A."/>
            <person name="Lucas S."/>
            <person name="Lapidus A."/>
            <person name="Glavina del Rio T."/>
            <person name="Dalin E."/>
            <person name="Tice H."/>
            <person name="Bruce D."/>
            <person name="Goodwin L."/>
            <person name="Pitluck S."/>
            <person name="Kiss H."/>
            <person name="Brettin T."/>
            <person name="Detter J.C."/>
            <person name="Han C."/>
            <person name="Kuske C.R."/>
            <person name="Schmutz J."/>
            <person name="Larimer F."/>
            <person name="Land M."/>
            <person name="Hauser L."/>
            <person name="Kyrpides N."/>
            <person name="Mikhailova N."/>
            <person name="Ingram L."/>
            <person name="Richardson P."/>
        </authorList>
    </citation>
    <scope>NUCLEOTIDE SEQUENCE [LARGE SCALE GENOMIC DNA]</scope>
    <source>
        <strain>ATCC 8739 / DSM 1576 / NBRC 3972 / NCIMB 8545 / WDCM 00012 / Crooks</strain>
    </source>
</reference>
<dbReference type="EC" id="3.6.4.-" evidence="1"/>
<dbReference type="EMBL" id="CP000946">
    <property type="protein sequence ID" value="ACA77422.1"/>
    <property type="molecule type" value="Genomic_DNA"/>
</dbReference>
<dbReference type="RefSeq" id="WP_000568519.1">
    <property type="nucleotide sequence ID" value="NZ_MTFT01000011.1"/>
</dbReference>
<dbReference type="SMR" id="B1J0M8"/>
<dbReference type="GeneID" id="75202735"/>
<dbReference type="KEGG" id="ecl:EcolC_1772"/>
<dbReference type="HOGENOM" id="CLU_055599_1_0_6"/>
<dbReference type="GO" id="GO:0005737">
    <property type="term" value="C:cytoplasm"/>
    <property type="evidence" value="ECO:0007669"/>
    <property type="project" value="UniProtKB-SubCell"/>
</dbReference>
<dbReference type="GO" id="GO:0048476">
    <property type="term" value="C:Holliday junction resolvase complex"/>
    <property type="evidence" value="ECO:0007669"/>
    <property type="project" value="UniProtKB-UniRule"/>
</dbReference>
<dbReference type="GO" id="GO:0005524">
    <property type="term" value="F:ATP binding"/>
    <property type="evidence" value="ECO:0007669"/>
    <property type="project" value="UniProtKB-UniRule"/>
</dbReference>
<dbReference type="GO" id="GO:0016887">
    <property type="term" value="F:ATP hydrolysis activity"/>
    <property type="evidence" value="ECO:0007669"/>
    <property type="project" value="InterPro"/>
</dbReference>
<dbReference type="GO" id="GO:0000400">
    <property type="term" value="F:four-way junction DNA binding"/>
    <property type="evidence" value="ECO:0007669"/>
    <property type="project" value="UniProtKB-UniRule"/>
</dbReference>
<dbReference type="GO" id="GO:0009378">
    <property type="term" value="F:four-way junction helicase activity"/>
    <property type="evidence" value="ECO:0007669"/>
    <property type="project" value="InterPro"/>
</dbReference>
<dbReference type="GO" id="GO:0006310">
    <property type="term" value="P:DNA recombination"/>
    <property type="evidence" value="ECO:0007669"/>
    <property type="project" value="UniProtKB-UniRule"/>
</dbReference>
<dbReference type="GO" id="GO:0006281">
    <property type="term" value="P:DNA repair"/>
    <property type="evidence" value="ECO:0007669"/>
    <property type="project" value="UniProtKB-UniRule"/>
</dbReference>
<dbReference type="GO" id="GO:0009432">
    <property type="term" value="P:SOS response"/>
    <property type="evidence" value="ECO:0007669"/>
    <property type="project" value="UniProtKB-UniRule"/>
</dbReference>
<dbReference type="CDD" id="cd00009">
    <property type="entry name" value="AAA"/>
    <property type="match status" value="1"/>
</dbReference>
<dbReference type="FunFam" id="1.10.10.10:FF:000086">
    <property type="entry name" value="Holliday junction ATP-dependent DNA helicase RuvB"/>
    <property type="match status" value="1"/>
</dbReference>
<dbReference type="FunFam" id="1.10.8.60:FF:000023">
    <property type="entry name" value="Holliday junction ATP-dependent DNA helicase RuvB"/>
    <property type="match status" value="1"/>
</dbReference>
<dbReference type="FunFam" id="3.40.50.300:FF:000073">
    <property type="entry name" value="Holliday junction ATP-dependent DNA helicase RuvB"/>
    <property type="match status" value="1"/>
</dbReference>
<dbReference type="Gene3D" id="1.10.8.60">
    <property type="match status" value="1"/>
</dbReference>
<dbReference type="Gene3D" id="3.40.50.300">
    <property type="entry name" value="P-loop containing nucleotide triphosphate hydrolases"/>
    <property type="match status" value="1"/>
</dbReference>
<dbReference type="Gene3D" id="1.10.10.10">
    <property type="entry name" value="Winged helix-like DNA-binding domain superfamily/Winged helix DNA-binding domain"/>
    <property type="match status" value="1"/>
</dbReference>
<dbReference type="HAMAP" id="MF_00016">
    <property type="entry name" value="DNA_HJ_migration_RuvB"/>
    <property type="match status" value="1"/>
</dbReference>
<dbReference type="InterPro" id="IPR003593">
    <property type="entry name" value="AAA+_ATPase"/>
</dbReference>
<dbReference type="InterPro" id="IPR041445">
    <property type="entry name" value="AAA_lid_4"/>
</dbReference>
<dbReference type="InterPro" id="IPR004605">
    <property type="entry name" value="DNA_helicase_Holl-junc_RuvB"/>
</dbReference>
<dbReference type="InterPro" id="IPR027417">
    <property type="entry name" value="P-loop_NTPase"/>
</dbReference>
<dbReference type="InterPro" id="IPR008824">
    <property type="entry name" value="RuvB-like_N"/>
</dbReference>
<dbReference type="InterPro" id="IPR008823">
    <property type="entry name" value="RuvB_C"/>
</dbReference>
<dbReference type="InterPro" id="IPR036388">
    <property type="entry name" value="WH-like_DNA-bd_sf"/>
</dbReference>
<dbReference type="InterPro" id="IPR036390">
    <property type="entry name" value="WH_DNA-bd_sf"/>
</dbReference>
<dbReference type="NCBIfam" id="NF000868">
    <property type="entry name" value="PRK00080.1"/>
    <property type="match status" value="1"/>
</dbReference>
<dbReference type="NCBIfam" id="TIGR00635">
    <property type="entry name" value="ruvB"/>
    <property type="match status" value="1"/>
</dbReference>
<dbReference type="PANTHER" id="PTHR42848">
    <property type="match status" value="1"/>
</dbReference>
<dbReference type="PANTHER" id="PTHR42848:SF1">
    <property type="entry name" value="HOLLIDAY JUNCTION BRANCH MIGRATION COMPLEX SUBUNIT RUVB"/>
    <property type="match status" value="1"/>
</dbReference>
<dbReference type="Pfam" id="PF17864">
    <property type="entry name" value="AAA_lid_4"/>
    <property type="match status" value="1"/>
</dbReference>
<dbReference type="Pfam" id="PF05491">
    <property type="entry name" value="RuvB_C"/>
    <property type="match status" value="1"/>
</dbReference>
<dbReference type="Pfam" id="PF05496">
    <property type="entry name" value="RuvB_N"/>
    <property type="match status" value="1"/>
</dbReference>
<dbReference type="SMART" id="SM00382">
    <property type="entry name" value="AAA"/>
    <property type="match status" value="1"/>
</dbReference>
<dbReference type="SUPFAM" id="SSF52540">
    <property type="entry name" value="P-loop containing nucleoside triphosphate hydrolases"/>
    <property type="match status" value="1"/>
</dbReference>
<dbReference type="SUPFAM" id="SSF46785">
    <property type="entry name" value="Winged helix' DNA-binding domain"/>
    <property type="match status" value="1"/>
</dbReference>
<feature type="chain" id="PRO_1000074083" description="Holliday junction branch migration complex subunit RuvB">
    <location>
        <begin position="1"/>
        <end position="336"/>
    </location>
</feature>
<feature type="region of interest" description="Large ATPase domain (RuvB-L)" evidence="1">
    <location>
        <begin position="4"/>
        <end position="184"/>
    </location>
</feature>
<feature type="region of interest" description="Small ATPAse domain (RuvB-S)" evidence="1">
    <location>
        <begin position="185"/>
        <end position="255"/>
    </location>
</feature>
<feature type="region of interest" description="Head domain (RuvB-H)" evidence="1">
    <location>
        <begin position="258"/>
        <end position="336"/>
    </location>
</feature>
<feature type="binding site" evidence="1">
    <location>
        <position position="23"/>
    </location>
    <ligand>
        <name>ATP</name>
        <dbReference type="ChEBI" id="CHEBI:30616"/>
    </ligand>
</feature>
<feature type="binding site" evidence="1">
    <location>
        <position position="24"/>
    </location>
    <ligand>
        <name>ATP</name>
        <dbReference type="ChEBI" id="CHEBI:30616"/>
    </ligand>
</feature>
<feature type="binding site" evidence="1">
    <location>
        <position position="65"/>
    </location>
    <ligand>
        <name>ATP</name>
        <dbReference type="ChEBI" id="CHEBI:30616"/>
    </ligand>
</feature>
<feature type="binding site" evidence="1">
    <location>
        <position position="68"/>
    </location>
    <ligand>
        <name>ATP</name>
        <dbReference type="ChEBI" id="CHEBI:30616"/>
    </ligand>
</feature>
<feature type="binding site" evidence="1">
    <location>
        <position position="69"/>
    </location>
    <ligand>
        <name>ATP</name>
        <dbReference type="ChEBI" id="CHEBI:30616"/>
    </ligand>
</feature>
<feature type="binding site" evidence="1">
    <location>
        <position position="69"/>
    </location>
    <ligand>
        <name>Mg(2+)</name>
        <dbReference type="ChEBI" id="CHEBI:18420"/>
    </ligand>
</feature>
<feature type="binding site" evidence="1">
    <location>
        <position position="70"/>
    </location>
    <ligand>
        <name>ATP</name>
        <dbReference type="ChEBI" id="CHEBI:30616"/>
    </ligand>
</feature>
<feature type="binding site" evidence="1">
    <location>
        <begin position="131"/>
        <end position="133"/>
    </location>
    <ligand>
        <name>ATP</name>
        <dbReference type="ChEBI" id="CHEBI:30616"/>
    </ligand>
</feature>
<feature type="binding site" evidence="1">
    <location>
        <position position="174"/>
    </location>
    <ligand>
        <name>ATP</name>
        <dbReference type="ChEBI" id="CHEBI:30616"/>
    </ligand>
</feature>
<feature type="binding site" evidence="1">
    <location>
        <position position="184"/>
    </location>
    <ligand>
        <name>ATP</name>
        <dbReference type="ChEBI" id="CHEBI:30616"/>
    </ligand>
</feature>
<feature type="binding site" evidence="1">
    <location>
        <position position="221"/>
    </location>
    <ligand>
        <name>ATP</name>
        <dbReference type="ChEBI" id="CHEBI:30616"/>
    </ligand>
</feature>
<feature type="binding site" evidence="1">
    <location>
        <position position="294"/>
    </location>
    <ligand>
        <name>DNA</name>
        <dbReference type="ChEBI" id="CHEBI:16991"/>
    </ligand>
</feature>
<feature type="binding site" evidence="1">
    <location>
        <position position="313"/>
    </location>
    <ligand>
        <name>DNA</name>
        <dbReference type="ChEBI" id="CHEBI:16991"/>
    </ligand>
</feature>
<feature type="binding site" evidence="1">
    <location>
        <position position="318"/>
    </location>
    <ligand>
        <name>DNA</name>
        <dbReference type="ChEBI" id="CHEBI:16991"/>
    </ligand>
</feature>